<dbReference type="EC" id="6.3.2.9" evidence="1"/>
<dbReference type="EMBL" id="CP000087">
    <property type="protein sequence ID" value="ABE04962.1"/>
    <property type="molecule type" value="Genomic_DNA"/>
</dbReference>
<dbReference type="RefSeq" id="WP_011477547.1">
    <property type="nucleotide sequence ID" value="NC_007940.1"/>
</dbReference>
<dbReference type="SMR" id="Q1RI52"/>
<dbReference type="KEGG" id="rbe:RBE_0881"/>
<dbReference type="eggNOG" id="COG0771">
    <property type="taxonomic scope" value="Bacteria"/>
</dbReference>
<dbReference type="HOGENOM" id="CLU_032540_3_0_5"/>
<dbReference type="OrthoDB" id="9809796at2"/>
<dbReference type="UniPathway" id="UPA00219"/>
<dbReference type="Proteomes" id="UP000001951">
    <property type="component" value="Chromosome"/>
</dbReference>
<dbReference type="GO" id="GO:0005737">
    <property type="term" value="C:cytoplasm"/>
    <property type="evidence" value="ECO:0007669"/>
    <property type="project" value="UniProtKB-SubCell"/>
</dbReference>
<dbReference type="GO" id="GO:0005524">
    <property type="term" value="F:ATP binding"/>
    <property type="evidence" value="ECO:0007669"/>
    <property type="project" value="UniProtKB-UniRule"/>
</dbReference>
<dbReference type="GO" id="GO:0004326">
    <property type="term" value="F:tetrahydrofolylpolyglutamate synthase activity"/>
    <property type="evidence" value="ECO:0007669"/>
    <property type="project" value="InterPro"/>
</dbReference>
<dbReference type="GO" id="GO:0008764">
    <property type="term" value="F:UDP-N-acetylmuramoylalanine-D-glutamate ligase activity"/>
    <property type="evidence" value="ECO:0007669"/>
    <property type="project" value="UniProtKB-UniRule"/>
</dbReference>
<dbReference type="GO" id="GO:0051301">
    <property type="term" value="P:cell division"/>
    <property type="evidence" value="ECO:0007669"/>
    <property type="project" value="UniProtKB-KW"/>
</dbReference>
<dbReference type="GO" id="GO:0071555">
    <property type="term" value="P:cell wall organization"/>
    <property type="evidence" value="ECO:0007669"/>
    <property type="project" value="UniProtKB-KW"/>
</dbReference>
<dbReference type="GO" id="GO:0009252">
    <property type="term" value="P:peptidoglycan biosynthetic process"/>
    <property type="evidence" value="ECO:0007669"/>
    <property type="project" value="UniProtKB-UniRule"/>
</dbReference>
<dbReference type="GO" id="GO:0008360">
    <property type="term" value="P:regulation of cell shape"/>
    <property type="evidence" value="ECO:0007669"/>
    <property type="project" value="UniProtKB-KW"/>
</dbReference>
<dbReference type="Gene3D" id="3.90.190.20">
    <property type="entry name" value="Mur ligase, C-terminal domain"/>
    <property type="match status" value="1"/>
</dbReference>
<dbReference type="Gene3D" id="3.40.1190.10">
    <property type="entry name" value="Mur-like, catalytic domain"/>
    <property type="match status" value="1"/>
</dbReference>
<dbReference type="Gene3D" id="3.40.50.720">
    <property type="entry name" value="NAD(P)-binding Rossmann-like Domain"/>
    <property type="match status" value="1"/>
</dbReference>
<dbReference type="HAMAP" id="MF_00639">
    <property type="entry name" value="MurD"/>
    <property type="match status" value="1"/>
</dbReference>
<dbReference type="InterPro" id="IPR018109">
    <property type="entry name" value="Folylpolyglutamate_synth_CS"/>
</dbReference>
<dbReference type="InterPro" id="IPR036565">
    <property type="entry name" value="Mur-like_cat_sf"/>
</dbReference>
<dbReference type="InterPro" id="IPR004101">
    <property type="entry name" value="Mur_ligase_C"/>
</dbReference>
<dbReference type="InterPro" id="IPR036615">
    <property type="entry name" value="Mur_ligase_C_dom_sf"/>
</dbReference>
<dbReference type="InterPro" id="IPR013221">
    <property type="entry name" value="Mur_ligase_cen"/>
</dbReference>
<dbReference type="InterPro" id="IPR005762">
    <property type="entry name" value="MurD"/>
</dbReference>
<dbReference type="NCBIfam" id="TIGR01087">
    <property type="entry name" value="murD"/>
    <property type="match status" value="1"/>
</dbReference>
<dbReference type="PANTHER" id="PTHR43692">
    <property type="entry name" value="UDP-N-ACETYLMURAMOYLALANINE--D-GLUTAMATE LIGASE"/>
    <property type="match status" value="1"/>
</dbReference>
<dbReference type="PANTHER" id="PTHR43692:SF1">
    <property type="entry name" value="UDP-N-ACETYLMURAMOYLALANINE--D-GLUTAMATE LIGASE"/>
    <property type="match status" value="1"/>
</dbReference>
<dbReference type="Pfam" id="PF02875">
    <property type="entry name" value="Mur_ligase_C"/>
    <property type="match status" value="1"/>
</dbReference>
<dbReference type="Pfam" id="PF08245">
    <property type="entry name" value="Mur_ligase_M"/>
    <property type="match status" value="1"/>
</dbReference>
<dbReference type="SUPFAM" id="SSF51984">
    <property type="entry name" value="MurCD N-terminal domain"/>
    <property type="match status" value="1"/>
</dbReference>
<dbReference type="SUPFAM" id="SSF53623">
    <property type="entry name" value="MurD-like peptide ligases, catalytic domain"/>
    <property type="match status" value="1"/>
</dbReference>
<dbReference type="SUPFAM" id="SSF53244">
    <property type="entry name" value="MurD-like peptide ligases, peptide-binding domain"/>
    <property type="match status" value="1"/>
</dbReference>
<gene>
    <name evidence="1" type="primary">murD</name>
    <name type="ordered locus">RBE_0881</name>
</gene>
<evidence type="ECO:0000255" key="1">
    <source>
        <dbReference type="HAMAP-Rule" id="MF_00639"/>
    </source>
</evidence>
<proteinExistence type="inferred from homology"/>
<keyword id="KW-0067">ATP-binding</keyword>
<keyword id="KW-0131">Cell cycle</keyword>
<keyword id="KW-0132">Cell division</keyword>
<keyword id="KW-0133">Cell shape</keyword>
<keyword id="KW-0961">Cell wall biogenesis/degradation</keyword>
<keyword id="KW-0963">Cytoplasm</keyword>
<keyword id="KW-0436">Ligase</keyword>
<keyword id="KW-0547">Nucleotide-binding</keyword>
<keyword id="KW-0573">Peptidoglycan synthesis</keyword>
<feature type="chain" id="PRO_0000257231" description="UDP-N-acetylmuramoylalanine--D-glutamate ligase">
    <location>
        <begin position="1"/>
        <end position="450"/>
    </location>
</feature>
<feature type="binding site" evidence="1">
    <location>
        <begin position="111"/>
        <end position="117"/>
    </location>
    <ligand>
        <name>ATP</name>
        <dbReference type="ChEBI" id="CHEBI:30616"/>
    </ligand>
</feature>
<name>MURD_RICBR</name>
<organism>
    <name type="scientific">Rickettsia bellii (strain RML369-C)</name>
    <dbReference type="NCBI Taxonomy" id="336407"/>
    <lineage>
        <taxon>Bacteria</taxon>
        <taxon>Pseudomonadati</taxon>
        <taxon>Pseudomonadota</taxon>
        <taxon>Alphaproteobacteria</taxon>
        <taxon>Rickettsiales</taxon>
        <taxon>Rickettsiaceae</taxon>
        <taxon>Rickettsieae</taxon>
        <taxon>Rickettsia</taxon>
        <taxon>belli group</taxon>
    </lineage>
</organism>
<reference key="1">
    <citation type="journal article" date="2006" name="PLoS Genet.">
        <title>Genome sequence of Rickettsia bellii illuminates the role of amoebae in gene exchanges between intracellular pathogens.</title>
        <authorList>
            <person name="Ogata H."/>
            <person name="La Scola B."/>
            <person name="Audic S."/>
            <person name="Renesto P."/>
            <person name="Blanc G."/>
            <person name="Robert C."/>
            <person name="Fournier P.-E."/>
            <person name="Claverie J.-M."/>
            <person name="Raoult D."/>
        </authorList>
    </citation>
    <scope>NUCLEOTIDE SEQUENCE [LARGE SCALE GENOMIC DNA]</scope>
    <source>
        <strain>RML369-C</strain>
    </source>
</reference>
<sequence length="450" mass="50584">MTIHKKQNIGVFGFGKTGISVYEELQSKCNIIAYDDLEVNRNKFEELFSKNYIIPISDIKWQNLDKIVLSPGIPLTHEIVKIAKNFNIPITSDIDLFFEKSKGLNLLAVTGTNGKSTTTALISHILSDNGLDYPVAGNIGVPVLQAKASKGGYVLELSSFQLDLVKTFAAKIAVLLNITPDHLDRHENMEGYITAKSKIFDRMDKDSYGIINIDNDYCHEIFTNLQQKHHIKLIPFSVTKILEKGISIVNDIITDNFFEHISFKLISNKSLQGIHNSENIAASYAVARIIGLEPVKIIESISSFQGLPHRMQYLGNIDDINFYNDSKASNAIAAVQSIKALDNIYWLAGGIAKEGGIEEIKPYFSKIKKAYFYGQAKEMFANTAKDIIDFVICDDLKQAFELAYKDACKDNEKEKNILLAPCCSSYDQFKNFEERGELFIRLYNTLNLCL</sequence>
<accession>Q1RI52</accession>
<comment type="function">
    <text evidence="1">Cell wall formation. Catalyzes the addition of glutamate to the nucleotide precursor UDP-N-acetylmuramoyl-L-alanine (UMA).</text>
</comment>
<comment type="catalytic activity">
    <reaction evidence="1">
        <text>UDP-N-acetyl-alpha-D-muramoyl-L-alanine + D-glutamate + ATP = UDP-N-acetyl-alpha-D-muramoyl-L-alanyl-D-glutamate + ADP + phosphate + H(+)</text>
        <dbReference type="Rhea" id="RHEA:16429"/>
        <dbReference type="ChEBI" id="CHEBI:15378"/>
        <dbReference type="ChEBI" id="CHEBI:29986"/>
        <dbReference type="ChEBI" id="CHEBI:30616"/>
        <dbReference type="ChEBI" id="CHEBI:43474"/>
        <dbReference type="ChEBI" id="CHEBI:83898"/>
        <dbReference type="ChEBI" id="CHEBI:83900"/>
        <dbReference type="ChEBI" id="CHEBI:456216"/>
        <dbReference type="EC" id="6.3.2.9"/>
    </reaction>
</comment>
<comment type="pathway">
    <text evidence="1">Cell wall biogenesis; peptidoglycan biosynthesis.</text>
</comment>
<comment type="subcellular location">
    <subcellularLocation>
        <location evidence="1">Cytoplasm</location>
    </subcellularLocation>
</comment>
<comment type="similarity">
    <text evidence="1">Belongs to the MurCDEF family.</text>
</comment>
<protein>
    <recommendedName>
        <fullName evidence="1">UDP-N-acetylmuramoylalanine--D-glutamate ligase</fullName>
        <ecNumber evidence="1">6.3.2.9</ecNumber>
    </recommendedName>
    <alternativeName>
        <fullName evidence="1">D-glutamic acid-adding enzyme</fullName>
    </alternativeName>
    <alternativeName>
        <fullName evidence="1">UDP-N-acetylmuramoyl-L-alanyl-D-glutamate synthetase</fullName>
    </alternativeName>
</protein>